<name>RS10_PSEA6</name>
<organism>
    <name type="scientific">Pseudoalteromonas atlantica (strain T6c / ATCC BAA-1087)</name>
    <dbReference type="NCBI Taxonomy" id="3042615"/>
    <lineage>
        <taxon>Bacteria</taxon>
        <taxon>Pseudomonadati</taxon>
        <taxon>Pseudomonadota</taxon>
        <taxon>Gammaproteobacteria</taxon>
        <taxon>Alteromonadales</taxon>
        <taxon>Alteromonadaceae</taxon>
        <taxon>Paraglaciecola</taxon>
    </lineage>
</organism>
<feature type="chain" id="PRO_1000015083" description="Small ribosomal subunit protein uS10">
    <location>
        <begin position="1"/>
        <end position="103"/>
    </location>
</feature>
<comment type="function">
    <text evidence="1">Involved in the binding of tRNA to the ribosomes.</text>
</comment>
<comment type="subunit">
    <text evidence="1">Part of the 30S ribosomal subunit.</text>
</comment>
<comment type="similarity">
    <text evidence="1">Belongs to the universal ribosomal protein uS10 family.</text>
</comment>
<reference key="1">
    <citation type="submission" date="2006-06" db="EMBL/GenBank/DDBJ databases">
        <title>Complete sequence of Pseudoalteromonas atlantica T6c.</title>
        <authorList>
            <consortium name="US DOE Joint Genome Institute"/>
            <person name="Copeland A."/>
            <person name="Lucas S."/>
            <person name="Lapidus A."/>
            <person name="Barry K."/>
            <person name="Detter J.C."/>
            <person name="Glavina del Rio T."/>
            <person name="Hammon N."/>
            <person name="Israni S."/>
            <person name="Dalin E."/>
            <person name="Tice H."/>
            <person name="Pitluck S."/>
            <person name="Saunders E."/>
            <person name="Brettin T."/>
            <person name="Bruce D."/>
            <person name="Han C."/>
            <person name="Tapia R."/>
            <person name="Gilna P."/>
            <person name="Schmutz J."/>
            <person name="Larimer F."/>
            <person name="Land M."/>
            <person name="Hauser L."/>
            <person name="Kyrpides N."/>
            <person name="Kim E."/>
            <person name="Karls A.C."/>
            <person name="Bartlett D."/>
            <person name="Higgins B.P."/>
            <person name="Richardson P."/>
        </authorList>
    </citation>
    <scope>NUCLEOTIDE SEQUENCE [LARGE SCALE GENOMIC DNA]</scope>
    <source>
        <strain>T6c / ATCC BAA-1087</strain>
    </source>
</reference>
<dbReference type="EMBL" id="CP000388">
    <property type="protein sequence ID" value="ABG38998.1"/>
    <property type="molecule type" value="Genomic_DNA"/>
</dbReference>
<dbReference type="RefSeq" id="WP_006992667.1">
    <property type="nucleotide sequence ID" value="NC_008228.1"/>
</dbReference>
<dbReference type="SMR" id="Q15YP0"/>
<dbReference type="STRING" id="342610.Patl_0468"/>
<dbReference type="KEGG" id="pat:Patl_0468"/>
<dbReference type="eggNOG" id="COG0051">
    <property type="taxonomic scope" value="Bacteria"/>
</dbReference>
<dbReference type="HOGENOM" id="CLU_122625_1_3_6"/>
<dbReference type="OrthoDB" id="9804464at2"/>
<dbReference type="Proteomes" id="UP000001981">
    <property type="component" value="Chromosome"/>
</dbReference>
<dbReference type="GO" id="GO:1990904">
    <property type="term" value="C:ribonucleoprotein complex"/>
    <property type="evidence" value="ECO:0007669"/>
    <property type="project" value="UniProtKB-KW"/>
</dbReference>
<dbReference type="GO" id="GO:0005840">
    <property type="term" value="C:ribosome"/>
    <property type="evidence" value="ECO:0007669"/>
    <property type="project" value="UniProtKB-KW"/>
</dbReference>
<dbReference type="GO" id="GO:0003735">
    <property type="term" value="F:structural constituent of ribosome"/>
    <property type="evidence" value="ECO:0007669"/>
    <property type="project" value="InterPro"/>
</dbReference>
<dbReference type="GO" id="GO:0000049">
    <property type="term" value="F:tRNA binding"/>
    <property type="evidence" value="ECO:0007669"/>
    <property type="project" value="UniProtKB-UniRule"/>
</dbReference>
<dbReference type="GO" id="GO:0006412">
    <property type="term" value="P:translation"/>
    <property type="evidence" value="ECO:0007669"/>
    <property type="project" value="UniProtKB-UniRule"/>
</dbReference>
<dbReference type="FunFam" id="3.30.70.600:FF:000001">
    <property type="entry name" value="30S ribosomal protein S10"/>
    <property type="match status" value="1"/>
</dbReference>
<dbReference type="Gene3D" id="3.30.70.600">
    <property type="entry name" value="Ribosomal protein S10 domain"/>
    <property type="match status" value="1"/>
</dbReference>
<dbReference type="HAMAP" id="MF_00508">
    <property type="entry name" value="Ribosomal_uS10"/>
    <property type="match status" value="1"/>
</dbReference>
<dbReference type="InterPro" id="IPR001848">
    <property type="entry name" value="Ribosomal_uS10"/>
</dbReference>
<dbReference type="InterPro" id="IPR018268">
    <property type="entry name" value="Ribosomal_uS10_CS"/>
</dbReference>
<dbReference type="InterPro" id="IPR027486">
    <property type="entry name" value="Ribosomal_uS10_dom"/>
</dbReference>
<dbReference type="InterPro" id="IPR036838">
    <property type="entry name" value="Ribosomal_uS10_dom_sf"/>
</dbReference>
<dbReference type="NCBIfam" id="NF001861">
    <property type="entry name" value="PRK00596.1"/>
    <property type="match status" value="1"/>
</dbReference>
<dbReference type="NCBIfam" id="TIGR01049">
    <property type="entry name" value="rpsJ_bact"/>
    <property type="match status" value="1"/>
</dbReference>
<dbReference type="PANTHER" id="PTHR11700">
    <property type="entry name" value="30S RIBOSOMAL PROTEIN S10 FAMILY MEMBER"/>
    <property type="match status" value="1"/>
</dbReference>
<dbReference type="Pfam" id="PF00338">
    <property type="entry name" value="Ribosomal_S10"/>
    <property type="match status" value="1"/>
</dbReference>
<dbReference type="PRINTS" id="PR00971">
    <property type="entry name" value="RIBOSOMALS10"/>
</dbReference>
<dbReference type="SMART" id="SM01403">
    <property type="entry name" value="Ribosomal_S10"/>
    <property type="match status" value="1"/>
</dbReference>
<dbReference type="SUPFAM" id="SSF54999">
    <property type="entry name" value="Ribosomal protein S10"/>
    <property type="match status" value="1"/>
</dbReference>
<dbReference type="PROSITE" id="PS00361">
    <property type="entry name" value="RIBOSOMAL_S10"/>
    <property type="match status" value="1"/>
</dbReference>
<sequence length="103" mass="11656">MPNQRIRIRLKAFDHKLIDQSTAEIVETAKRTGAQVSGPIPLPTRKERYTILTSPHVNKDARDQYEIRTHKRLVDIIEPTDKTVDALMRLDLAAGVDVQISLG</sequence>
<protein>
    <recommendedName>
        <fullName evidence="1">Small ribosomal subunit protein uS10</fullName>
    </recommendedName>
    <alternativeName>
        <fullName evidence="2">30S ribosomal protein S10</fullName>
    </alternativeName>
</protein>
<accession>Q15YP0</accession>
<keyword id="KW-0687">Ribonucleoprotein</keyword>
<keyword id="KW-0689">Ribosomal protein</keyword>
<evidence type="ECO:0000255" key="1">
    <source>
        <dbReference type="HAMAP-Rule" id="MF_00508"/>
    </source>
</evidence>
<evidence type="ECO:0000305" key="2"/>
<proteinExistence type="inferred from homology"/>
<gene>
    <name evidence="1" type="primary">rpsJ</name>
    <name type="ordered locus">Patl_0468</name>
</gene>